<sequence>MYDYIKGQLTKITAKYIVVEANGLGYMITVANPYSFTDCVNQQVTIYLHQVIREDAQLLFGFHSEEEKDVFLKLISVSGIGPTTALAIVAVDDNRGLVNAIDNSDITYLMRFPKIGKKTAQQMVLDLAGKFVEAPKEESSKLPKAKHQENEQLDEAIEALLALGYKATELKKIRAFFEGTSETAEQYIKSALKMLMKG</sequence>
<name>RUVA_STREM</name>
<comment type="function">
    <text evidence="1">The RuvA-RuvB-RuvC complex processes Holliday junction (HJ) DNA during genetic recombination and DNA repair, while the RuvA-RuvB complex plays an important role in the rescue of blocked DNA replication forks via replication fork reversal (RFR). RuvA specifically binds to HJ cruciform DNA, conferring on it an open structure. The RuvB hexamer acts as an ATP-dependent pump, pulling dsDNA into and through the RuvAB complex. HJ branch migration allows RuvC to scan DNA until it finds its consensus sequence, where it cleaves and resolves the cruciform DNA.</text>
</comment>
<comment type="subunit">
    <text evidence="1">Homotetramer. Forms an RuvA(8)-RuvB(12)-Holliday junction (HJ) complex. HJ DNA is sandwiched between 2 RuvA tetramers; dsDNA enters through RuvA and exits via RuvB. An RuvB hexamer assembles on each DNA strand where it exits the tetramer. Each RuvB hexamer is contacted by two RuvA subunits (via domain III) on 2 adjacent RuvB subunits; this complex drives branch migration. In the full resolvosome a probable DNA-RuvA(4)-RuvB(12)-RuvC(2) complex forms which resolves the HJ.</text>
</comment>
<comment type="subcellular location">
    <subcellularLocation>
        <location evidence="1">Cytoplasm</location>
    </subcellularLocation>
</comment>
<comment type="domain">
    <text evidence="1">Has three domains with a flexible linker between the domains II and III and assumes an 'L' shape. Domain III is highly mobile and contacts RuvB.</text>
</comment>
<comment type="similarity">
    <text evidence="1">Belongs to the RuvA family.</text>
</comment>
<gene>
    <name evidence="1" type="primary">ruvA</name>
    <name type="ordered locus">Sez_1880</name>
</gene>
<proteinExistence type="inferred from homology"/>
<protein>
    <recommendedName>
        <fullName evidence="1">Holliday junction branch migration complex subunit RuvA</fullName>
    </recommendedName>
</protein>
<organism>
    <name type="scientific">Streptococcus equi subsp. zooepidemicus (strain MGCS10565)</name>
    <dbReference type="NCBI Taxonomy" id="552526"/>
    <lineage>
        <taxon>Bacteria</taxon>
        <taxon>Bacillati</taxon>
        <taxon>Bacillota</taxon>
        <taxon>Bacilli</taxon>
        <taxon>Lactobacillales</taxon>
        <taxon>Streptococcaceae</taxon>
        <taxon>Streptococcus</taxon>
    </lineage>
</organism>
<evidence type="ECO:0000255" key="1">
    <source>
        <dbReference type="HAMAP-Rule" id="MF_00031"/>
    </source>
</evidence>
<dbReference type="EMBL" id="CP001129">
    <property type="protein sequence ID" value="ACG63204.1"/>
    <property type="molecule type" value="Genomic_DNA"/>
</dbReference>
<dbReference type="RefSeq" id="WP_012516448.1">
    <property type="nucleotide sequence ID" value="NC_011134.1"/>
</dbReference>
<dbReference type="SMR" id="B4U0J5"/>
<dbReference type="KEGG" id="sez:Sez_1880"/>
<dbReference type="HOGENOM" id="CLU_087936_1_0_9"/>
<dbReference type="Proteomes" id="UP000001873">
    <property type="component" value="Chromosome"/>
</dbReference>
<dbReference type="GO" id="GO:0005737">
    <property type="term" value="C:cytoplasm"/>
    <property type="evidence" value="ECO:0007669"/>
    <property type="project" value="UniProtKB-SubCell"/>
</dbReference>
<dbReference type="GO" id="GO:0009379">
    <property type="term" value="C:Holliday junction helicase complex"/>
    <property type="evidence" value="ECO:0007669"/>
    <property type="project" value="InterPro"/>
</dbReference>
<dbReference type="GO" id="GO:0048476">
    <property type="term" value="C:Holliday junction resolvase complex"/>
    <property type="evidence" value="ECO:0007669"/>
    <property type="project" value="UniProtKB-UniRule"/>
</dbReference>
<dbReference type="GO" id="GO:0005524">
    <property type="term" value="F:ATP binding"/>
    <property type="evidence" value="ECO:0007669"/>
    <property type="project" value="InterPro"/>
</dbReference>
<dbReference type="GO" id="GO:0000400">
    <property type="term" value="F:four-way junction DNA binding"/>
    <property type="evidence" value="ECO:0007669"/>
    <property type="project" value="UniProtKB-UniRule"/>
</dbReference>
<dbReference type="GO" id="GO:0009378">
    <property type="term" value="F:four-way junction helicase activity"/>
    <property type="evidence" value="ECO:0007669"/>
    <property type="project" value="InterPro"/>
</dbReference>
<dbReference type="GO" id="GO:0006310">
    <property type="term" value="P:DNA recombination"/>
    <property type="evidence" value="ECO:0007669"/>
    <property type="project" value="UniProtKB-UniRule"/>
</dbReference>
<dbReference type="GO" id="GO:0006281">
    <property type="term" value="P:DNA repair"/>
    <property type="evidence" value="ECO:0007669"/>
    <property type="project" value="UniProtKB-UniRule"/>
</dbReference>
<dbReference type="CDD" id="cd14332">
    <property type="entry name" value="UBA_RuvA_C"/>
    <property type="match status" value="1"/>
</dbReference>
<dbReference type="Gene3D" id="1.10.150.20">
    <property type="entry name" value="5' to 3' exonuclease, C-terminal subdomain"/>
    <property type="match status" value="1"/>
</dbReference>
<dbReference type="Gene3D" id="1.10.8.10">
    <property type="entry name" value="DNA helicase RuvA subunit, C-terminal domain"/>
    <property type="match status" value="1"/>
</dbReference>
<dbReference type="Gene3D" id="2.40.50.140">
    <property type="entry name" value="Nucleic acid-binding proteins"/>
    <property type="match status" value="1"/>
</dbReference>
<dbReference type="HAMAP" id="MF_00031">
    <property type="entry name" value="DNA_HJ_migration_RuvA"/>
    <property type="match status" value="1"/>
</dbReference>
<dbReference type="InterPro" id="IPR013849">
    <property type="entry name" value="DNA_helicase_Holl-junc_RuvA_I"/>
</dbReference>
<dbReference type="InterPro" id="IPR003583">
    <property type="entry name" value="Hlx-hairpin-Hlx_DNA-bd_motif"/>
</dbReference>
<dbReference type="InterPro" id="IPR012340">
    <property type="entry name" value="NA-bd_OB-fold"/>
</dbReference>
<dbReference type="InterPro" id="IPR000085">
    <property type="entry name" value="RuvA"/>
</dbReference>
<dbReference type="InterPro" id="IPR010994">
    <property type="entry name" value="RuvA_2-like"/>
</dbReference>
<dbReference type="InterPro" id="IPR011114">
    <property type="entry name" value="RuvA_C"/>
</dbReference>
<dbReference type="InterPro" id="IPR036267">
    <property type="entry name" value="RuvA_C_sf"/>
</dbReference>
<dbReference type="NCBIfam" id="TIGR00084">
    <property type="entry name" value="ruvA"/>
    <property type="match status" value="1"/>
</dbReference>
<dbReference type="Pfam" id="PF14520">
    <property type="entry name" value="HHH_5"/>
    <property type="match status" value="1"/>
</dbReference>
<dbReference type="Pfam" id="PF07499">
    <property type="entry name" value="RuvA_C"/>
    <property type="match status" value="1"/>
</dbReference>
<dbReference type="Pfam" id="PF01330">
    <property type="entry name" value="RuvA_N"/>
    <property type="match status" value="1"/>
</dbReference>
<dbReference type="SMART" id="SM00278">
    <property type="entry name" value="HhH1"/>
    <property type="match status" value="2"/>
</dbReference>
<dbReference type="SUPFAM" id="SSF46929">
    <property type="entry name" value="DNA helicase RuvA subunit, C-terminal domain"/>
    <property type="match status" value="1"/>
</dbReference>
<dbReference type="SUPFAM" id="SSF50249">
    <property type="entry name" value="Nucleic acid-binding proteins"/>
    <property type="match status" value="1"/>
</dbReference>
<dbReference type="SUPFAM" id="SSF47781">
    <property type="entry name" value="RuvA domain 2-like"/>
    <property type="match status" value="1"/>
</dbReference>
<feature type="chain" id="PRO_1000090371" description="Holliday junction branch migration complex subunit RuvA">
    <location>
        <begin position="1"/>
        <end position="198"/>
    </location>
</feature>
<feature type="region of interest" description="Domain I" evidence="1">
    <location>
        <begin position="1"/>
        <end position="63"/>
    </location>
</feature>
<feature type="region of interest" description="Domain II" evidence="1">
    <location>
        <begin position="64"/>
        <end position="142"/>
    </location>
</feature>
<feature type="region of interest" description="Flexible linker" evidence="1">
    <location>
        <begin position="143"/>
        <end position="147"/>
    </location>
</feature>
<feature type="region of interest" description="Domain III" evidence="1">
    <location>
        <begin position="148"/>
        <end position="198"/>
    </location>
</feature>
<reference key="1">
    <citation type="journal article" date="2008" name="PLoS ONE">
        <title>Genome sequence of a lancefield group C Streptococcus zooepidemicus strain causing epidemic nephritis: new information about an old disease.</title>
        <authorList>
            <person name="Beres S.B."/>
            <person name="Sesso R."/>
            <person name="Pinto S.W.L."/>
            <person name="Hoe N.P."/>
            <person name="Porcella S.F."/>
            <person name="Deleo F.R."/>
            <person name="Musser J.M."/>
        </authorList>
    </citation>
    <scope>NUCLEOTIDE SEQUENCE [LARGE SCALE GENOMIC DNA]</scope>
    <source>
        <strain>MGCS10565</strain>
    </source>
</reference>
<accession>B4U0J5</accession>
<keyword id="KW-0963">Cytoplasm</keyword>
<keyword id="KW-0227">DNA damage</keyword>
<keyword id="KW-0233">DNA recombination</keyword>
<keyword id="KW-0234">DNA repair</keyword>
<keyword id="KW-0238">DNA-binding</keyword>